<reference key="1">
    <citation type="journal article" date="2002" name="Nature">
        <title>Sequence and analysis of chromosome 2 of Dictyostelium discoideum.</title>
        <authorList>
            <person name="Gloeckner G."/>
            <person name="Eichinger L."/>
            <person name="Szafranski K."/>
            <person name="Pachebat J.A."/>
            <person name="Bankier A.T."/>
            <person name="Dear P.H."/>
            <person name="Lehmann R."/>
            <person name="Baumgart C."/>
            <person name="Parra G."/>
            <person name="Abril J.F."/>
            <person name="Guigo R."/>
            <person name="Kumpf K."/>
            <person name="Tunggal B."/>
            <person name="Cox E.C."/>
            <person name="Quail M.A."/>
            <person name="Platzer M."/>
            <person name="Rosenthal A."/>
            <person name="Noegel A.A."/>
        </authorList>
    </citation>
    <scope>NUCLEOTIDE SEQUENCE [LARGE SCALE GENOMIC DNA]</scope>
    <source>
        <strain>AX4</strain>
    </source>
</reference>
<reference key="2">
    <citation type="journal article" date="2005" name="Nature">
        <title>The genome of the social amoeba Dictyostelium discoideum.</title>
        <authorList>
            <person name="Eichinger L."/>
            <person name="Pachebat J.A."/>
            <person name="Gloeckner G."/>
            <person name="Rajandream M.A."/>
            <person name="Sucgang R."/>
            <person name="Berriman M."/>
            <person name="Song J."/>
            <person name="Olsen R."/>
            <person name="Szafranski K."/>
            <person name="Xu Q."/>
            <person name="Tunggal B."/>
            <person name="Kummerfeld S."/>
            <person name="Madera M."/>
            <person name="Konfortov B.A."/>
            <person name="Rivero F."/>
            <person name="Bankier A.T."/>
            <person name="Lehmann R."/>
            <person name="Hamlin N."/>
            <person name="Davies R."/>
            <person name="Gaudet P."/>
            <person name="Fey P."/>
            <person name="Pilcher K."/>
            <person name="Chen G."/>
            <person name="Saunders D."/>
            <person name="Sodergren E.J."/>
            <person name="Davis P."/>
            <person name="Kerhornou A."/>
            <person name="Nie X."/>
            <person name="Hall N."/>
            <person name="Anjard C."/>
            <person name="Hemphill L."/>
            <person name="Bason N."/>
            <person name="Farbrother P."/>
            <person name="Desany B."/>
            <person name="Just E."/>
            <person name="Morio T."/>
            <person name="Rost R."/>
            <person name="Churcher C.M."/>
            <person name="Cooper J."/>
            <person name="Haydock S."/>
            <person name="van Driessche N."/>
            <person name="Cronin A."/>
            <person name="Goodhead I."/>
            <person name="Muzny D.M."/>
            <person name="Mourier T."/>
            <person name="Pain A."/>
            <person name="Lu M."/>
            <person name="Harper D."/>
            <person name="Lindsay R."/>
            <person name="Hauser H."/>
            <person name="James K.D."/>
            <person name="Quiles M."/>
            <person name="Madan Babu M."/>
            <person name="Saito T."/>
            <person name="Buchrieser C."/>
            <person name="Wardroper A."/>
            <person name="Felder M."/>
            <person name="Thangavelu M."/>
            <person name="Johnson D."/>
            <person name="Knights A."/>
            <person name="Loulseged H."/>
            <person name="Mungall K.L."/>
            <person name="Oliver K."/>
            <person name="Price C."/>
            <person name="Quail M.A."/>
            <person name="Urushihara H."/>
            <person name="Hernandez J."/>
            <person name="Rabbinowitsch E."/>
            <person name="Steffen D."/>
            <person name="Sanders M."/>
            <person name="Ma J."/>
            <person name="Kohara Y."/>
            <person name="Sharp S."/>
            <person name="Simmonds M.N."/>
            <person name="Spiegler S."/>
            <person name="Tivey A."/>
            <person name="Sugano S."/>
            <person name="White B."/>
            <person name="Walker D."/>
            <person name="Woodward J.R."/>
            <person name="Winckler T."/>
            <person name="Tanaka Y."/>
            <person name="Shaulsky G."/>
            <person name="Schleicher M."/>
            <person name="Weinstock G.M."/>
            <person name="Rosenthal A."/>
            <person name="Cox E.C."/>
            <person name="Chisholm R.L."/>
            <person name="Gibbs R.A."/>
            <person name="Loomis W.F."/>
            <person name="Platzer M."/>
            <person name="Kay R.R."/>
            <person name="Williams J.G."/>
            <person name="Dear P.H."/>
            <person name="Noegel A.A."/>
            <person name="Barrell B.G."/>
            <person name="Kuspa A."/>
        </authorList>
    </citation>
    <scope>NUCLEOTIDE SEQUENCE [LARGE SCALE GENOMIC DNA]</scope>
    <source>
        <strain>AX4</strain>
    </source>
</reference>
<comment type="similarity">
    <text evidence="1">Belongs to the hssA/B family.</text>
</comment>
<keyword id="KW-1185">Reference proteome</keyword>
<dbReference type="EMBL" id="AAFI02000008">
    <property type="protein sequence ID" value="EAL70966.1"/>
    <property type="molecule type" value="Genomic_DNA"/>
</dbReference>
<dbReference type="RefSeq" id="XP_645004.1">
    <property type="nucleotide sequence ID" value="XM_639912.1"/>
</dbReference>
<dbReference type="PaxDb" id="44689-DDB0233581"/>
<dbReference type="EnsemblProtists" id="EAL70966">
    <property type="protein sequence ID" value="EAL70966"/>
    <property type="gene ID" value="DDB_G0272658"/>
</dbReference>
<dbReference type="GeneID" id="8618681"/>
<dbReference type="KEGG" id="ddi:DDB_G0272658"/>
<dbReference type="dictyBase" id="DDB_G0272658">
    <property type="gene designation" value="sigN1"/>
</dbReference>
<dbReference type="HOGENOM" id="CLU_190274_0_0_1"/>
<dbReference type="InParanoid" id="Q7KWN7"/>
<dbReference type="PRO" id="PR:Q7KWN7"/>
<dbReference type="Proteomes" id="UP000002195">
    <property type="component" value="Chromosome 2"/>
</dbReference>
<dbReference type="InterPro" id="IPR008455">
    <property type="entry name" value="HssA/B-related"/>
</dbReference>
<dbReference type="PANTHER" id="PTHR31857">
    <property type="entry name" value="HSSA/B-LIKE PROTEIN 17-RELATED"/>
    <property type="match status" value="1"/>
</dbReference>
<dbReference type="PANTHER" id="PTHR31857:SF2">
    <property type="entry name" value="HSSA_B-LIKE PROTEIN 17-RELATED"/>
    <property type="match status" value="1"/>
</dbReference>
<dbReference type="Pfam" id="PF05710">
    <property type="entry name" value="Coiled"/>
    <property type="match status" value="1"/>
</dbReference>
<organism>
    <name type="scientific">Dictyostelium discoideum</name>
    <name type="common">Social amoeba</name>
    <dbReference type="NCBI Taxonomy" id="44689"/>
    <lineage>
        <taxon>Eukaryota</taxon>
        <taxon>Amoebozoa</taxon>
        <taxon>Evosea</taxon>
        <taxon>Eumycetozoa</taxon>
        <taxon>Dictyostelia</taxon>
        <taxon>Dictyosteliales</taxon>
        <taxon>Dictyosteliaceae</taxon>
        <taxon>Dictyostelium</taxon>
    </lineage>
</organism>
<protein>
    <recommendedName>
        <fullName>HssA/B-like protein 21</fullName>
    </recommendedName>
</protein>
<proteinExistence type="inferred from homology"/>
<sequence>MTILGSISSIGNVKLISKSNNLSSLSNSSSSLQSMNSIQCGGGCGNGGLLGGVGGLVGGVLVGTGVIVGSVLHGVGSILTGGSNNCGCN</sequence>
<evidence type="ECO:0000305" key="1"/>
<accession>Q7KWN7</accession>
<accession>Q558R2</accession>
<gene>
    <name type="primary">hssl21</name>
    <name type="ORF">DDB_G0272658</name>
</gene>
<feature type="chain" id="PRO_0000330391" description="HssA/B-like protein 21">
    <location>
        <begin position="1"/>
        <end position="89"/>
    </location>
</feature>
<name>HSL21_DICDI</name>